<proteinExistence type="inferred from homology"/>
<accession>A0QFC0</accession>
<gene>
    <name evidence="1" type="primary">tatA</name>
    <name type="ordered locus">MAV_2409</name>
</gene>
<sequence length="93" mass="9955">MGSLSPWHWAILAVVVILLFGAKKLPDAARSLGKSMRIFKSELREMQSENKTETSALGAQSESSAANPTPVQSQRVDPPAPSEQGHSEARPAS</sequence>
<organism>
    <name type="scientific">Mycobacterium avium (strain 104)</name>
    <dbReference type="NCBI Taxonomy" id="243243"/>
    <lineage>
        <taxon>Bacteria</taxon>
        <taxon>Bacillati</taxon>
        <taxon>Actinomycetota</taxon>
        <taxon>Actinomycetes</taxon>
        <taxon>Mycobacteriales</taxon>
        <taxon>Mycobacteriaceae</taxon>
        <taxon>Mycobacterium</taxon>
        <taxon>Mycobacterium avium complex (MAC)</taxon>
    </lineage>
</organism>
<name>TATA_MYCA1</name>
<comment type="function">
    <text evidence="1">Part of the twin-arginine translocation (Tat) system that transports large folded proteins containing a characteristic twin-arginine motif in their signal peptide across membranes. TatA could form the protein-conducting channel of the Tat system.</text>
</comment>
<comment type="subunit">
    <text evidence="1">The Tat system comprises two distinct complexes: a TatABC complex, containing multiple copies of TatA, TatB and TatC subunits, and a separate TatA complex, containing only TatA subunits. Substrates initially bind to the TatABC complex, which probably triggers association of the separate TatA complex to form the active translocon.</text>
</comment>
<comment type="subcellular location">
    <subcellularLocation>
        <location evidence="1">Cell membrane</location>
        <topology evidence="1">Single-pass membrane protein</topology>
    </subcellularLocation>
</comment>
<comment type="similarity">
    <text evidence="1">Belongs to the TatA/E family.</text>
</comment>
<keyword id="KW-1003">Cell membrane</keyword>
<keyword id="KW-0472">Membrane</keyword>
<keyword id="KW-0653">Protein transport</keyword>
<keyword id="KW-0811">Translocation</keyword>
<keyword id="KW-0812">Transmembrane</keyword>
<keyword id="KW-1133">Transmembrane helix</keyword>
<keyword id="KW-0813">Transport</keyword>
<evidence type="ECO:0000255" key="1">
    <source>
        <dbReference type="HAMAP-Rule" id="MF_00236"/>
    </source>
</evidence>
<evidence type="ECO:0000256" key="2">
    <source>
        <dbReference type="SAM" id="MobiDB-lite"/>
    </source>
</evidence>
<dbReference type="EMBL" id="CP000479">
    <property type="protein sequence ID" value="ABK68795.1"/>
    <property type="molecule type" value="Genomic_DNA"/>
</dbReference>
<dbReference type="RefSeq" id="WP_003878076.1">
    <property type="nucleotide sequence ID" value="NC_008595.1"/>
</dbReference>
<dbReference type="SMR" id="A0QFC0"/>
<dbReference type="GeneID" id="75269953"/>
<dbReference type="KEGG" id="mav:MAV_2409"/>
<dbReference type="HOGENOM" id="CLU_086034_4_2_11"/>
<dbReference type="Proteomes" id="UP000001574">
    <property type="component" value="Chromosome"/>
</dbReference>
<dbReference type="GO" id="GO:0033281">
    <property type="term" value="C:TAT protein transport complex"/>
    <property type="evidence" value="ECO:0007669"/>
    <property type="project" value="UniProtKB-UniRule"/>
</dbReference>
<dbReference type="GO" id="GO:0008320">
    <property type="term" value="F:protein transmembrane transporter activity"/>
    <property type="evidence" value="ECO:0007669"/>
    <property type="project" value="UniProtKB-UniRule"/>
</dbReference>
<dbReference type="GO" id="GO:0043953">
    <property type="term" value="P:protein transport by the Tat complex"/>
    <property type="evidence" value="ECO:0007669"/>
    <property type="project" value="UniProtKB-UniRule"/>
</dbReference>
<dbReference type="Gene3D" id="1.20.5.3310">
    <property type="match status" value="1"/>
</dbReference>
<dbReference type="HAMAP" id="MF_00236">
    <property type="entry name" value="TatA_E"/>
    <property type="match status" value="1"/>
</dbReference>
<dbReference type="InterPro" id="IPR003369">
    <property type="entry name" value="TatA/B/E"/>
</dbReference>
<dbReference type="InterPro" id="IPR006312">
    <property type="entry name" value="TatA/E"/>
</dbReference>
<dbReference type="NCBIfam" id="NF001854">
    <property type="entry name" value="PRK00575.1"/>
    <property type="match status" value="1"/>
</dbReference>
<dbReference type="NCBIfam" id="TIGR01411">
    <property type="entry name" value="tatAE"/>
    <property type="match status" value="1"/>
</dbReference>
<dbReference type="PANTHER" id="PTHR42982">
    <property type="entry name" value="SEC-INDEPENDENT PROTEIN TRANSLOCASE PROTEIN TATA"/>
    <property type="match status" value="1"/>
</dbReference>
<dbReference type="PANTHER" id="PTHR42982:SF8">
    <property type="entry name" value="SEC-INDEPENDENT PROTEIN TRANSLOCASE PROTEIN TATA"/>
    <property type="match status" value="1"/>
</dbReference>
<dbReference type="Pfam" id="PF02416">
    <property type="entry name" value="TatA_B_E"/>
    <property type="match status" value="1"/>
</dbReference>
<protein>
    <recommendedName>
        <fullName evidence="1">Sec-independent protein translocase protein TatA</fullName>
    </recommendedName>
</protein>
<feature type="chain" id="PRO_1000044398" description="Sec-independent protein translocase protein TatA">
    <location>
        <begin position="1"/>
        <end position="93"/>
    </location>
</feature>
<feature type="transmembrane region" description="Helical" evidence="1">
    <location>
        <begin position="1"/>
        <end position="21"/>
    </location>
</feature>
<feature type="region of interest" description="Disordered" evidence="2">
    <location>
        <begin position="45"/>
        <end position="93"/>
    </location>
</feature>
<feature type="compositionally biased region" description="Polar residues" evidence="2">
    <location>
        <begin position="53"/>
        <end position="75"/>
    </location>
</feature>
<reference key="1">
    <citation type="submission" date="2006-10" db="EMBL/GenBank/DDBJ databases">
        <authorList>
            <person name="Fleischmann R.D."/>
            <person name="Dodson R.J."/>
            <person name="Haft D.H."/>
            <person name="Merkel J.S."/>
            <person name="Nelson W.C."/>
            <person name="Fraser C.M."/>
        </authorList>
    </citation>
    <scope>NUCLEOTIDE SEQUENCE [LARGE SCALE GENOMIC DNA]</scope>
    <source>
        <strain>104</strain>
    </source>
</reference>